<protein>
    <recommendedName>
        <fullName evidence="1">Phospho-N-acetylmuramoyl-pentapeptide-transferase</fullName>
        <ecNumber evidence="1">2.7.8.13</ecNumber>
    </recommendedName>
    <alternativeName>
        <fullName evidence="1">UDP-MurNAc-pentapeptide phosphotransferase</fullName>
    </alternativeName>
</protein>
<gene>
    <name evidence="1" type="primary">mraY</name>
    <name type="ordered locus">MGAS9429_Spy1362</name>
</gene>
<organism>
    <name type="scientific">Streptococcus pyogenes serotype M12 (strain MGAS9429)</name>
    <dbReference type="NCBI Taxonomy" id="370551"/>
    <lineage>
        <taxon>Bacteria</taxon>
        <taxon>Bacillati</taxon>
        <taxon>Bacillota</taxon>
        <taxon>Bacilli</taxon>
        <taxon>Lactobacillales</taxon>
        <taxon>Streptococcaceae</taxon>
        <taxon>Streptococcus</taxon>
    </lineage>
</organism>
<name>MRAY_STRPC</name>
<comment type="function">
    <text evidence="1">Catalyzes the initial step of the lipid cycle reactions in the biosynthesis of the cell wall peptidoglycan: transfers peptidoglycan precursor phospho-MurNAc-pentapeptide from UDP-MurNAc-pentapeptide onto the lipid carrier undecaprenyl phosphate, yielding undecaprenyl-pyrophosphoryl-MurNAc-pentapeptide, known as lipid I.</text>
</comment>
<comment type="catalytic activity">
    <reaction evidence="1">
        <text>UDP-N-acetyl-alpha-D-muramoyl-L-alanyl-gamma-D-glutamyl-L-lysyl-D-alanyl-D-alanine + di-trans,octa-cis-undecaprenyl phosphate = Mur2Ac(oyl-L-Ala-gamma-D-Glu-L-Lys-D-Ala-D-Ala)-di-trans,octa-cis-undecaprenyl diphosphate + UMP</text>
        <dbReference type="Rhea" id="RHEA:21920"/>
        <dbReference type="ChEBI" id="CHEBI:57865"/>
        <dbReference type="ChEBI" id="CHEBI:60032"/>
        <dbReference type="ChEBI" id="CHEBI:60392"/>
        <dbReference type="ChEBI" id="CHEBI:70758"/>
        <dbReference type="EC" id="2.7.8.13"/>
    </reaction>
</comment>
<comment type="cofactor">
    <cofactor evidence="1">
        <name>Mg(2+)</name>
        <dbReference type="ChEBI" id="CHEBI:18420"/>
    </cofactor>
</comment>
<comment type="pathway">
    <text evidence="1">Cell wall biogenesis; peptidoglycan biosynthesis.</text>
</comment>
<comment type="subcellular location">
    <subcellularLocation>
        <location evidence="1">Cell membrane</location>
        <topology evidence="1">Multi-pass membrane protein</topology>
    </subcellularLocation>
</comment>
<comment type="similarity">
    <text evidence="1">Belongs to the glycosyltransferase 4 family. MraY subfamily.</text>
</comment>
<accession>Q1JKM0</accession>
<keyword id="KW-0131">Cell cycle</keyword>
<keyword id="KW-0132">Cell division</keyword>
<keyword id="KW-1003">Cell membrane</keyword>
<keyword id="KW-0133">Cell shape</keyword>
<keyword id="KW-0961">Cell wall biogenesis/degradation</keyword>
<keyword id="KW-0460">Magnesium</keyword>
<keyword id="KW-0472">Membrane</keyword>
<keyword id="KW-0479">Metal-binding</keyword>
<keyword id="KW-0573">Peptidoglycan synthesis</keyword>
<keyword id="KW-0808">Transferase</keyword>
<keyword id="KW-0812">Transmembrane</keyword>
<keyword id="KW-1133">Transmembrane helix</keyword>
<proteinExistence type="inferred from homology"/>
<evidence type="ECO:0000255" key="1">
    <source>
        <dbReference type="HAMAP-Rule" id="MF_00038"/>
    </source>
</evidence>
<sequence>MFLTLIAAIISFMVSAFTMPYFIKFYQLKKIGGQQMHEDVKQHLAKAGTPTMGGTVFLLVATAVSLLVSLFSIKNTQSLALISGILSIVVIYGIIGFLDDFLKIFKQINEGLTAKQKLALQLVGGLMFYFLHVSPSGISSINVFGYQLPLGIFYLFFVLFWVVGFSNAVNLTDGIDGLASISVVISLVTYGVIAYVQSQFDVLLLIGAMIGALLGFFCFNHKPAKVFMGDVGSLALGAMLAAISIALRQEWTLLIIGIVYVLETSSVMLQVSYFKYTKKKYGEGRRIFRMTPFHHHLELGGLSGKGKKWSEWQVDAFLWGVGSLASLLVLAILYVF</sequence>
<feature type="chain" id="PRO_1000003074" description="Phospho-N-acetylmuramoyl-pentapeptide-transferase">
    <location>
        <begin position="1"/>
        <end position="336"/>
    </location>
</feature>
<feature type="transmembrane region" description="Helical" evidence="1">
    <location>
        <begin position="3"/>
        <end position="23"/>
    </location>
</feature>
<feature type="transmembrane region" description="Helical" evidence="1">
    <location>
        <begin position="53"/>
        <end position="73"/>
    </location>
</feature>
<feature type="transmembrane region" description="Helical" evidence="1">
    <location>
        <begin position="78"/>
        <end position="98"/>
    </location>
</feature>
<feature type="transmembrane region" description="Helical" evidence="1">
    <location>
        <begin position="118"/>
        <end position="138"/>
    </location>
</feature>
<feature type="transmembrane region" description="Helical" evidence="1">
    <location>
        <begin position="143"/>
        <end position="163"/>
    </location>
</feature>
<feature type="transmembrane region" description="Helical" evidence="1">
    <location>
        <begin position="174"/>
        <end position="194"/>
    </location>
</feature>
<feature type="transmembrane region" description="Helical" evidence="1">
    <location>
        <begin position="200"/>
        <end position="220"/>
    </location>
</feature>
<feature type="transmembrane region" description="Helical" evidence="1">
    <location>
        <begin position="226"/>
        <end position="246"/>
    </location>
</feature>
<feature type="transmembrane region" description="Helical" evidence="1">
    <location>
        <begin position="251"/>
        <end position="271"/>
    </location>
</feature>
<feature type="transmembrane region" description="Helical" evidence="1">
    <location>
        <begin position="316"/>
        <end position="336"/>
    </location>
</feature>
<dbReference type="EC" id="2.7.8.13" evidence="1"/>
<dbReference type="EMBL" id="CP000259">
    <property type="protein sequence ID" value="ABF32549.1"/>
    <property type="molecule type" value="Genomic_DNA"/>
</dbReference>
<dbReference type="RefSeq" id="WP_002988900.1">
    <property type="nucleotide sequence ID" value="NC_008021.1"/>
</dbReference>
<dbReference type="SMR" id="Q1JKM0"/>
<dbReference type="KEGG" id="spk:MGAS9429_Spy1362"/>
<dbReference type="HOGENOM" id="CLU_023982_0_1_9"/>
<dbReference type="UniPathway" id="UPA00219"/>
<dbReference type="Proteomes" id="UP000002433">
    <property type="component" value="Chromosome"/>
</dbReference>
<dbReference type="GO" id="GO:0005886">
    <property type="term" value="C:plasma membrane"/>
    <property type="evidence" value="ECO:0007669"/>
    <property type="project" value="UniProtKB-SubCell"/>
</dbReference>
<dbReference type="GO" id="GO:0046872">
    <property type="term" value="F:metal ion binding"/>
    <property type="evidence" value="ECO:0007669"/>
    <property type="project" value="UniProtKB-KW"/>
</dbReference>
<dbReference type="GO" id="GO:0008963">
    <property type="term" value="F:phospho-N-acetylmuramoyl-pentapeptide-transferase activity"/>
    <property type="evidence" value="ECO:0007669"/>
    <property type="project" value="UniProtKB-UniRule"/>
</dbReference>
<dbReference type="GO" id="GO:0051301">
    <property type="term" value="P:cell division"/>
    <property type="evidence" value="ECO:0007669"/>
    <property type="project" value="UniProtKB-KW"/>
</dbReference>
<dbReference type="GO" id="GO:0071555">
    <property type="term" value="P:cell wall organization"/>
    <property type="evidence" value="ECO:0007669"/>
    <property type="project" value="UniProtKB-KW"/>
</dbReference>
<dbReference type="GO" id="GO:0009252">
    <property type="term" value="P:peptidoglycan biosynthetic process"/>
    <property type="evidence" value="ECO:0007669"/>
    <property type="project" value="UniProtKB-UniRule"/>
</dbReference>
<dbReference type="GO" id="GO:0008360">
    <property type="term" value="P:regulation of cell shape"/>
    <property type="evidence" value="ECO:0007669"/>
    <property type="project" value="UniProtKB-KW"/>
</dbReference>
<dbReference type="CDD" id="cd06852">
    <property type="entry name" value="GT_MraY"/>
    <property type="match status" value="1"/>
</dbReference>
<dbReference type="HAMAP" id="MF_00038">
    <property type="entry name" value="MraY"/>
    <property type="match status" value="1"/>
</dbReference>
<dbReference type="InterPro" id="IPR000715">
    <property type="entry name" value="Glycosyl_transferase_4"/>
</dbReference>
<dbReference type="InterPro" id="IPR003524">
    <property type="entry name" value="PNAcMuramoyl-5peptid_Trfase"/>
</dbReference>
<dbReference type="InterPro" id="IPR018480">
    <property type="entry name" value="PNAcMuramoyl-5peptid_Trfase_CS"/>
</dbReference>
<dbReference type="NCBIfam" id="TIGR00445">
    <property type="entry name" value="mraY"/>
    <property type="match status" value="1"/>
</dbReference>
<dbReference type="PANTHER" id="PTHR22926">
    <property type="entry name" value="PHOSPHO-N-ACETYLMURAMOYL-PENTAPEPTIDE-TRANSFERASE"/>
    <property type="match status" value="1"/>
</dbReference>
<dbReference type="PANTHER" id="PTHR22926:SF5">
    <property type="entry name" value="PHOSPHO-N-ACETYLMURAMOYL-PENTAPEPTIDE-TRANSFERASE HOMOLOG"/>
    <property type="match status" value="1"/>
</dbReference>
<dbReference type="Pfam" id="PF00953">
    <property type="entry name" value="Glycos_transf_4"/>
    <property type="match status" value="1"/>
</dbReference>
<dbReference type="Pfam" id="PF10555">
    <property type="entry name" value="MraY_sig1"/>
    <property type="match status" value="1"/>
</dbReference>
<dbReference type="PROSITE" id="PS01348">
    <property type="entry name" value="MRAY_2"/>
    <property type="match status" value="1"/>
</dbReference>
<reference key="1">
    <citation type="journal article" date="2006" name="Proc. Natl. Acad. Sci. U.S.A.">
        <title>Molecular genetic anatomy of inter- and intraserotype variation in the human bacterial pathogen group A Streptococcus.</title>
        <authorList>
            <person name="Beres S.B."/>
            <person name="Richter E.W."/>
            <person name="Nagiec M.J."/>
            <person name="Sumby P."/>
            <person name="Porcella S.F."/>
            <person name="DeLeo F.R."/>
            <person name="Musser J.M."/>
        </authorList>
    </citation>
    <scope>NUCLEOTIDE SEQUENCE [LARGE SCALE GENOMIC DNA]</scope>
    <source>
        <strain>MGAS9429</strain>
    </source>
</reference>